<reference key="1">
    <citation type="journal article" date="2003" name="Proc. Natl. Acad. Sci. U.S.A.">
        <title>The genome sequence of Clostridium tetani, the causative agent of tetanus disease.</title>
        <authorList>
            <person name="Brueggemann H."/>
            <person name="Baeumer S."/>
            <person name="Fricke W.F."/>
            <person name="Wiezer A."/>
            <person name="Liesegang H."/>
            <person name="Decker I."/>
            <person name="Herzberg C."/>
            <person name="Martinez-Arias R."/>
            <person name="Merkl R."/>
            <person name="Henne A."/>
            <person name="Gottschalk G."/>
        </authorList>
    </citation>
    <scope>NUCLEOTIDE SEQUENCE [LARGE SCALE GENOMIC DNA]</scope>
    <source>
        <strain>Massachusetts / E88</strain>
    </source>
</reference>
<comment type="catalytic activity">
    <reaction evidence="1">
        <text>(6S)-5,6,7,8-tetrahydrofolate + formate + ATP = (6R)-10-formyltetrahydrofolate + ADP + phosphate</text>
        <dbReference type="Rhea" id="RHEA:20221"/>
        <dbReference type="ChEBI" id="CHEBI:15740"/>
        <dbReference type="ChEBI" id="CHEBI:30616"/>
        <dbReference type="ChEBI" id="CHEBI:43474"/>
        <dbReference type="ChEBI" id="CHEBI:57453"/>
        <dbReference type="ChEBI" id="CHEBI:195366"/>
        <dbReference type="ChEBI" id="CHEBI:456216"/>
        <dbReference type="EC" id="6.3.4.3"/>
    </reaction>
</comment>
<comment type="pathway">
    <text evidence="1">One-carbon metabolism; tetrahydrofolate interconversion.</text>
</comment>
<comment type="similarity">
    <text evidence="1">Belongs to the formate--tetrahydrofolate ligase family.</text>
</comment>
<keyword id="KW-0067">ATP-binding</keyword>
<keyword id="KW-0436">Ligase</keyword>
<keyword id="KW-0547">Nucleotide-binding</keyword>
<keyword id="KW-0554">One-carbon metabolism</keyword>
<keyword id="KW-1185">Reference proteome</keyword>
<dbReference type="EC" id="6.3.4.3" evidence="1"/>
<dbReference type="EMBL" id="AE015927">
    <property type="protein sequence ID" value="AAO36782.1"/>
    <property type="molecule type" value="Genomic_DNA"/>
</dbReference>
<dbReference type="RefSeq" id="WP_011100443.1">
    <property type="nucleotide sequence ID" value="NC_004557.1"/>
</dbReference>
<dbReference type="SMR" id="Q891R3"/>
<dbReference type="STRING" id="212717.CTC_02304"/>
<dbReference type="GeneID" id="24254752"/>
<dbReference type="KEGG" id="ctc:CTC_02304"/>
<dbReference type="HOGENOM" id="CLU_003601_3_3_9"/>
<dbReference type="OrthoDB" id="9761733at2"/>
<dbReference type="UniPathway" id="UPA00193"/>
<dbReference type="Proteomes" id="UP000001412">
    <property type="component" value="Chromosome"/>
</dbReference>
<dbReference type="GO" id="GO:0005524">
    <property type="term" value="F:ATP binding"/>
    <property type="evidence" value="ECO:0007669"/>
    <property type="project" value="UniProtKB-UniRule"/>
</dbReference>
<dbReference type="GO" id="GO:0004329">
    <property type="term" value="F:formate-tetrahydrofolate ligase activity"/>
    <property type="evidence" value="ECO:0007669"/>
    <property type="project" value="UniProtKB-UniRule"/>
</dbReference>
<dbReference type="GO" id="GO:0035999">
    <property type="term" value="P:tetrahydrofolate interconversion"/>
    <property type="evidence" value="ECO:0007669"/>
    <property type="project" value="UniProtKB-UniRule"/>
</dbReference>
<dbReference type="CDD" id="cd00477">
    <property type="entry name" value="FTHFS"/>
    <property type="match status" value="1"/>
</dbReference>
<dbReference type="FunFam" id="3.30.1510.10:FF:000001">
    <property type="entry name" value="Formate--tetrahydrofolate ligase"/>
    <property type="match status" value="1"/>
</dbReference>
<dbReference type="Gene3D" id="3.30.1510.10">
    <property type="entry name" value="Domain 2, N(10)-formyltetrahydrofolate synthetase"/>
    <property type="match status" value="1"/>
</dbReference>
<dbReference type="Gene3D" id="3.10.410.10">
    <property type="entry name" value="Formyltetrahydrofolate synthetase, domain 3"/>
    <property type="match status" value="1"/>
</dbReference>
<dbReference type="Gene3D" id="3.40.50.300">
    <property type="entry name" value="P-loop containing nucleotide triphosphate hydrolases"/>
    <property type="match status" value="1"/>
</dbReference>
<dbReference type="HAMAP" id="MF_01543">
    <property type="entry name" value="FTHFS"/>
    <property type="match status" value="1"/>
</dbReference>
<dbReference type="InterPro" id="IPR000559">
    <property type="entry name" value="Formate_THF_ligase"/>
</dbReference>
<dbReference type="InterPro" id="IPR020628">
    <property type="entry name" value="Formate_THF_ligase_CS"/>
</dbReference>
<dbReference type="InterPro" id="IPR027417">
    <property type="entry name" value="P-loop_NTPase"/>
</dbReference>
<dbReference type="NCBIfam" id="NF010030">
    <property type="entry name" value="PRK13505.1"/>
    <property type="match status" value="1"/>
</dbReference>
<dbReference type="Pfam" id="PF01268">
    <property type="entry name" value="FTHFS"/>
    <property type="match status" value="1"/>
</dbReference>
<dbReference type="SUPFAM" id="SSF52540">
    <property type="entry name" value="P-loop containing nucleoside triphosphate hydrolases"/>
    <property type="match status" value="1"/>
</dbReference>
<dbReference type="PROSITE" id="PS00721">
    <property type="entry name" value="FTHFS_1"/>
    <property type="match status" value="1"/>
</dbReference>
<dbReference type="PROSITE" id="PS00722">
    <property type="entry name" value="FTHFS_2"/>
    <property type="match status" value="1"/>
</dbReference>
<accession>Q891R3</accession>
<proteinExistence type="inferred from homology"/>
<feature type="chain" id="PRO_0000199341" description="Formate--tetrahydrofolate ligase">
    <location>
        <begin position="1"/>
        <end position="559"/>
    </location>
</feature>
<feature type="binding site" evidence="1">
    <location>
        <begin position="68"/>
        <end position="75"/>
    </location>
    <ligand>
        <name>ATP</name>
        <dbReference type="ChEBI" id="CHEBI:30616"/>
    </ligand>
</feature>
<evidence type="ECO:0000255" key="1">
    <source>
        <dbReference type="HAMAP-Rule" id="MF_01543"/>
    </source>
</evidence>
<organism>
    <name type="scientific">Clostridium tetani (strain Massachusetts / E88)</name>
    <dbReference type="NCBI Taxonomy" id="212717"/>
    <lineage>
        <taxon>Bacteria</taxon>
        <taxon>Bacillati</taxon>
        <taxon>Bacillota</taxon>
        <taxon>Clostridia</taxon>
        <taxon>Eubacteriales</taxon>
        <taxon>Clostridiaceae</taxon>
        <taxon>Clostridium</taxon>
    </lineage>
</organism>
<name>FTHS_CLOTE</name>
<gene>
    <name evidence="1" type="primary">fhs</name>
    <name type="ordered locus">CTC_02304</name>
</gene>
<sequence length="559" mass="60073">MEKVLTDIEIAQKAQMKPIGEIAEKYGILEDELELYGKYKAKLSLDIFDRLKDEKDGKLVLVTAISPTPAGEGKSTTSIGLGQALNKIGKKTFIALREPSLGPVFGVKGGAAGGGYAQVVPMEDINLHFTGDMHAIGITNNLLSAAIDNHIHQGNALKIDSREIVWKRVVDMNDRALRNVVVGMGGKACGFTRQDGFMITVASEVMAILCLAKDLMDLKERLGNIIVAYSLEGKPVTAGDLKVNGAMAMLLKDAIKPNIVQTLENTPALIHGGPFANIAHGCNSLIATRLGLKLGDILVTEAGFGADLGAEKFLDIKCRYGGLKPDAVVIVATIRALKMHGGVKKTELSGENLEALDKGFANLQKHITNMKNFGLPVMVAVNRFITDSEAEIDLLIKKCKEIGVEVSLNEVWAKGGEGGIEMAEKLVKILETEKPNYKPLYDVEDSIPEKLNKIVKELYGGEGVVIESSAMKQIKKLEEIGLDKLPICMAKTQFSFSDDATLMGAPKGFNITIKNVRVSAGAGFIVCETGNIMVMPGLPKVPAAEKMDVDENGNISGLF</sequence>
<protein>
    <recommendedName>
        <fullName evidence="1">Formate--tetrahydrofolate ligase</fullName>
        <ecNumber evidence="1">6.3.4.3</ecNumber>
    </recommendedName>
    <alternativeName>
        <fullName evidence="1">Formyltetrahydrofolate synthetase</fullName>
        <shortName evidence="1">FHS</shortName>
        <shortName evidence="1">FTHFS</shortName>
    </alternativeName>
</protein>